<evidence type="ECO:0000255" key="1">
    <source>
        <dbReference type="HAMAP-Rule" id="MF_00098"/>
    </source>
</evidence>
<dbReference type="EC" id="6.1.1.10" evidence="1"/>
<dbReference type="EMBL" id="CP000686">
    <property type="protein sequence ID" value="ABQ90422.1"/>
    <property type="molecule type" value="Genomic_DNA"/>
</dbReference>
<dbReference type="RefSeq" id="WP_011956768.1">
    <property type="nucleotide sequence ID" value="NC_009523.1"/>
</dbReference>
<dbReference type="SMR" id="A5UUW9"/>
<dbReference type="STRING" id="357808.RoseRS_2037"/>
<dbReference type="KEGG" id="rrs:RoseRS_2037"/>
<dbReference type="eggNOG" id="COG0143">
    <property type="taxonomic scope" value="Bacteria"/>
</dbReference>
<dbReference type="HOGENOM" id="CLU_009710_1_2_0"/>
<dbReference type="OrthoDB" id="9810191at2"/>
<dbReference type="Proteomes" id="UP000006554">
    <property type="component" value="Chromosome"/>
</dbReference>
<dbReference type="GO" id="GO:0005829">
    <property type="term" value="C:cytosol"/>
    <property type="evidence" value="ECO:0007669"/>
    <property type="project" value="TreeGrafter"/>
</dbReference>
<dbReference type="GO" id="GO:0005524">
    <property type="term" value="F:ATP binding"/>
    <property type="evidence" value="ECO:0007669"/>
    <property type="project" value="UniProtKB-UniRule"/>
</dbReference>
<dbReference type="GO" id="GO:0046872">
    <property type="term" value="F:metal ion binding"/>
    <property type="evidence" value="ECO:0007669"/>
    <property type="project" value="UniProtKB-KW"/>
</dbReference>
<dbReference type="GO" id="GO:0004825">
    <property type="term" value="F:methionine-tRNA ligase activity"/>
    <property type="evidence" value="ECO:0007669"/>
    <property type="project" value="UniProtKB-UniRule"/>
</dbReference>
<dbReference type="GO" id="GO:0006431">
    <property type="term" value="P:methionyl-tRNA aminoacylation"/>
    <property type="evidence" value="ECO:0007669"/>
    <property type="project" value="UniProtKB-UniRule"/>
</dbReference>
<dbReference type="CDD" id="cd07957">
    <property type="entry name" value="Anticodon_Ia_Met"/>
    <property type="match status" value="1"/>
</dbReference>
<dbReference type="CDD" id="cd00814">
    <property type="entry name" value="MetRS_core"/>
    <property type="match status" value="1"/>
</dbReference>
<dbReference type="FunFam" id="2.20.28.20:FF:000001">
    <property type="entry name" value="Methionine--tRNA ligase"/>
    <property type="match status" value="1"/>
</dbReference>
<dbReference type="Gene3D" id="3.40.50.620">
    <property type="entry name" value="HUPs"/>
    <property type="match status" value="1"/>
</dbReference>
<dbReference type="Gene3D" id="1.10.730.10">
    <property type="entry name" value="Isoleucyl-tRNA Synthetase, Domain 1"/>
    <property type="match status" value="1"/>
</dbReference>
<dbReference type="Gene3D" id="2.20.28.20">
    <property type="entry name" value="Methionyl-tRNA synthetase, Zn-domain"/>
    <property type="match status" value="1"/>
</dbReference>
<dbReference type="HAMAP" id="MF_00098">
    <property type="entry name" value="Met_tRNA_synth_type1"/>
    <property type="match status" value="1"/>
</dbReference>
<dbReference type="InterPro" id="IPR001412">
    <property type="entry name" value="aa-tRNA-synth_I_CS"/>
</dbReference>
<dbReference type="InterPro" id="IPR041872">
    <property type="entry name" value="Anticodon_Met"/>
</dbReference>
<dbReference type="InterPro" id="IPR023458">
    <property type="entry name" value="Met-tRNA_ligase_1"/>
</dbReference>
<dbReference type="InterPro" id="IPR014758">
    <property type="entry name" value="Met-tRNA_synth"/>
</dbReference>
<dbReference type="InterPro" id="IPR015413">
    <property type="entry name" value="Methionyl/Leucyl_tRNA_Synth"/>
</dbReference>
<dbReference type="InterPro" id="IPR033911">
    <property type="entry name" value="MetRS_core"/>
</dbReference>
<dbReference type="InterPro" id="IPR029038">
    <property type="entry name" value="MetRS_Zn"/>
</dbReference>
<dbReference type="InterPro" id="IPR014729">
    <property type="entry name" value="Rossmann-like_a/b/a_fold"/>
</dbReference>
<dbReference type="InterPro" id="IPR009080">
    <property type="entry name" value="tRNAsynth_Ia_anticodon-bd"/>
</dbReference>
<dbReference type="NCBIfam" id="TIGR00398">
    <property type="entry name" value="metG"/>
    <property type="match status" value="1"/>
</dbReference>
<dbReference type="NCBIfam" id="NF001100">
    <property type="entry name" value="PRK00133.1"/>
    <property type="match status" value="1"/>
</dbReference>
<dbReference type="PANTHER" id="PTHR45765">
    <property type="entry name" value="METHIONINE--TRNA LIGASE"/>
    <property type="match status" value="1"/>
</dbReference>
<dbReference type="PANTHER" id="PTHR45765:SF1">
    <property type="entry name" value="METHIONINE--TRNA LIGASE, CYTOPLASMIC"/>
    <property type="match status" value="1"/>
</dbReference>
<dbReference type="Pfam" id="PF19303">
    <property type="entry name" value="Anticodon_3"/>
    <property type="match status" value="1"/>
</dbReference>
<dbReference type="Pfam" id="PF09334">
    <property type="entry name" value="tRNA-synt_1g"/>
    <property type="match status" value="1"/>
</dbReference>
<dbReference type="PRINTS" id="PR01041">
    <property type="entry name" value="TRNASYNTHMET"/>
</dbReference>
<dbReference type="SUPFAM" id="SSF47323">
    <property type="entry name" value="Anticodon-binding domain of a subclass of class I aminoacyl-tRNA synthetases"/>
    <property type="match status" value="1"/>
</dbReference>
<dbReference type="SUPFAM" id="SSF57770">
    <property type="entry name" value="Methionyl-tRNA synthetase (MetRS), Zn-domain"/>
    <property type="match status" value="1"/>
</dbReference>
<dbReference type="SUPFAM" id="SSF52374">
    <property type="entry name" value="Nucleotidylyl transferase"/>
    <property type="match status" value="1"/>
</dbReference>
<dbReference type="PROSITE" id="PS00178">
    <property type="entry name" value="AA_TRNA_LIGASE_I"/>
    <property type="match status" value="1"/>
</dbReference>
<accession>A5UUW9</accession>
<proteinExistence type="inferred from homology"/>
<gene>
    <name evidence="1" type="primary">metG</name>
    <name type="ordered locus">RoseRS_2037</name>
</gene>
<protein>
    <recommendedName>
        <fullName evidence="1">Methionine--tRNA ligase</fullName>
        <ecNumber evidence="1">6.1.1.10</ecNumber>
    </recommendedName>
    <alternativeName>
        <fullName evidence="1">Methionyl-tRNA synthetase</fullName>
        <shortName evidence="1">MetRS</shortName>
    </alternativeName>
</protein>
<reference key="1">
    <citation type="submission" date="2007-04" db="EMBL/GenBank/DDBJ databases">
        <title>Complete sequence of Roseiflexus sp. RS-1.</title>
        <authorList>
            <consortium name="US DOE Joint Genome Institute"/>
            <person name="Copeland A."/>
            <person name="Lucas S."/>
            <person name="Lapidus A."/>
            <person name="Barry K."/>
            <person name="Detter J.C."/>
            <person name="Glavina del Rio T."/>
            <person name="Hammon N."/>
            <person name="Israni S."/>
            <person name="Dalin E."/>
            <person name="Tice H."/>
            <person name="Pitluck S."/>
            <person name="Chertkov O."/>
            <person name="Brettin T."/>
            <person name="Bruce D."/>
            <person name="Han C."/>
            <person name="Schmutz J."/>
            <person name="Larimer F."/>
            <person name="Land M."/>
            <person name="Hauser L."/>
            <person name="Kyrpides N."/>
            <person name="Mikhailova N."/>
            <person name="Bryant D.A."/>
            <person name="Richardson P."/>
        </authorList>
    </citation>
    <scope>NUCLEOTIDE SEQUENCE [LARGE SCALE GENOMIC DNA]</scope>
    <source>
        <strain>RS-1</strain>
    </source>
</reference>
<organism>
    <name type="scientific">Roseiflexus sp. (strain RS-1)</name>
    <dbReference type="NCBI Taxonomy" id="357808"/>
    <lineage>
        <taxon>Bacteria</taxon>
        <taxon>Bacillati</taxon>
        <taxon>Chloroflexota</taxon>
        <taxon>Chloroflexia</taxon>
        <taxon>Chloroflexales</taxon>
        <taxon>Roseiflexineae</taxon>
        <taxon>Roseiflexaceae</taxon>
        <taxon>Roseiflexus</taxon>
    </lineage>
</organism>
<keyword id="KW-0030">Aminoacyl-tRNA synthetase</keyword>
<keyword id="KW-0067">ATP-binding</keyword>
<keyword id="KW-0963">Cytoplasm</keyword>
<keyword id="KW-0436">Ligase</keyword>
<keyword id="KW-0479">Metal-binding</keyword>
<keyword id="KW-0547">Nucleotide-binding</keyword>
<keyword id="KW-0648">Protein biosynthesis</keyword>
<keyword id="KW-0862">Zinc</keyword>
<feature type="chain" id="PRO_0000331890" description="Methionine--tRNA ligase">
    <location>
        <begin position="1"/>
        <end position="592"/>
    </location>
</feature>
<feature type="short sequence motif" description="'HIGH' region">
    <location>
        <begin position="12"/>
        <end position="22"/>
    </location>
</feature>
<feature type="short sequence motif" description="'KMSKS' region">
    <location>
        <begin position="342"/>
        <end position="346"/>
    </location>
</feature>
<feature type="binding site" evidence="1">
    <location>
        <position position="144"/>
    </location>
    <ligand>
        <name>Zn(2+)</name>
        <dbReference type="ChEBI" id="CHEBI:29105"/>
    </ligand>
</feature>
<feature type="binding site" evidence="1">
    <location>
        <position position="147"/>
    </location>
    <ligand>
        <name>Zn(2+)</name>
        <dbReference type="ChEBI" id="CHEBI:29105"/>
    </ligand>
</feature>
<feature type="binding site" evidence="1">
    <location>
        <position position="157"/>
    </location>
    <ligand>
        <name>Zn(2+)</name>
        <dbReference type="ChEBI" id="CHEBI:29105"/>
    </ligand>
</feature>
<feature type="binding site" evidence="1">
    <location>
        <position position="160"/>
    </location>
    <ligand>
        <name>Zn(2+)</name>
        <dbReference type="ChEBI" id="CHEBI:29105"/>
    </ligand>
</feature>
<feature type="binding site" evidence="1">
    <location>
        <position position="345"/>
    </location>
    <ligand>
        <name>ATP</name>
        <dbReference type="ChEBI" id="CHEBI:30616"/>
    </ligand>
</feature>
<sequence length="592" mass="66865">MPDNILVAVAWPYANGPFHVGHIAGAYLPADVFARYQRLRGNRVLMVSGSDCHGTPITIAAEREGITPQDVIRRYHPTFLKTFQTLGISFDLFTQTYTDNHYRVTTDIFLRLLENGYLYKETMVGSYSETLGRFLPDRFVEGTCPNCGYPRARGDQCDGCGHLHDPQDLIAPRSVLDGAPVTFRETEHFFLDLAKLEPQLRAWLDSVDRSYWRPNTLLFTQNWLREGLRGRAITRDLEWGVPVPVDDPTFKDKRIYVWFDAVIGYYSASIEWAQRSGAPDAWQEWWVCRPDGSSPARSYYFIGKDNIPFHTIIWPAILIGYGDLALPYDVPANEFLNLEGDKMSTSRNWALWAPEIEERYQSDAIRYYLIANGPETRDSNWSWADFVQRVNSELVATWGNLANRVISLTHRNFGAVPQPGALIDADRQLIAATQQAFEQVTTLLEGVKLRAALQEAMALAQTANQYLSDQEPWKLVKSDQERAATVLFVALRTVDTLKTLFCPFLPFSSQRLHELLGYSGTIAPQPYVEETDAPDGAPRLILTGDYTTEAGLWTPSVLAPGQPIHAPAPLFQKLDESIVADELARLHAKVRS</sequence>
<comment type="function">
    <text evidence="1">Is required not only for elongation of protein synthesis but also for the initiation of all mRNA translation through initiator tRNA(fMet) aminoacylation.</text>
</comment>
<comment type="catalytic activity">
    <reaction evidence="1">
        <text>tRNA(Met) + L-methionine + ATP = L-methionyl-tRNA(Met) + AMP + diphosphate</text>
        <dbReference type="Rhea" id="RHEA:13481"/>
        <dbReference type="Rhea" id="RHEA-COMP:9667"/>
        <dbReference type="Rhea" id="RHEA-COMP:9698"/>
        <dbReference type="ChEBI" id="CHEBI:30616"/>
        <dbReference type="ChEBI" id="CHEBI:33019"/>
        <dbReference type="ChEBI" id="CHEBI:57844"/>
        <dbReference type="ChEBI" id="CHEBI:78442"/>
        <dbReference type="ChEBI" id="CHEBI:78530"/>
        <dbReference type="ChEBI" id="CHEBI:456215"/>
        <dbReference type="EC" id="6.1.1.10"/>
    </reaction>
</comment>
<comment type="cofactor">
    <cofactor evidence="1">
        <name>Zn(2+)</name>
        <dbReference type="ChEBI" id="CHEBI:29105"/>
    </cofactor>
    <text evidence="1">Binds 1 zinc ion per subunit.</text>
</comment>
<comment type="subunit">
    <text evidence="1">Monomer.</text>
</comment>
<comment type="subcellular location">
    <subcellularLocation>
        <location evidence="1">Cytoplasm</location>
    </subcellularLocation>
</comment>
<comment type="similarity">
    <text evidence="1">Belongs to the class-I aminoacyl-tRNA synthetase family. MetG type 1 subfamily.</text>
</comment>
<name>SYM_ROSS1</name>